<keyword id="KW-0378">Hydrolase</keyword>
<keyword id="KW-0456">Lyase</keyword>
<keyword id="KW-0511">Multifunctional enzyme</keyword>
<keyword id="KW-0520">NAD</keyword>
<keyword id="KW-0521">NADP</keyword>
<keyword id="KW-0560">Oxidoreductase</keyword>
<keyword id="KW-0597">Phosphoprotein</keyword>
<keyword id="KW-1185">Reference proteome</keyword>
<keyword id="KW-0808">Transferase</keyword>
<feature type="chain" id="PRO_0000180290" description="Fatty acid synthase beta subunit stcK">
    <location>
        <begin position="1"/>
        <end position="1914"/>
    </location>
</feature>
<feature type="domain" description="MaoC-like" evidence="4">
    <location>
        <begin position="1398"/>
        <end position="1532"/>
    </location>
</feature>
<feature type="region of interest" description="Acetyltransferase (AT) domain" evidence="3 4">
    <location>
        <begin position="17"/>
        <end position="395"/>
    </location>
</feature>
<feature type="region of interest" description="Enoyl reductase (ER) domain" evidence="3 4">
    <location>
        <begin position="446"/>
        <end position="692"/>
    </location>
</feature>
<feature type="region of interest" description="Dehydratase (DH) domain" evidence="3 4">
    <location>
        <begin position="1009"/>
        <end position="1509"/>
    </location>
</feature>
<feature type="region of interest" description="Malonyl/palmitoyl transferase (MT/PT) domain" evidence="3 4">
    <location>
        <begin position="1548"/>
        <end position="1900"/>
    </location>
</feature>
<feature type="sequence conflict" description="In Ref. 1; AAC49199." evidence="15" ref="1">
    <original>I</original>
    <variation>T</variation>
    <location>
        <position position="525"/>
    </location>
</feature>
<protein>
    <recommendedName>
        <fullName evidence="14">Fatty acid synthase beta subunit stcK</fullName>
        <ecNumber evidence="3">2.3.1.86</ecNumber>
    </recommendedName>
    <domain>
        <recommendedName>
            <fullName evidence="3">3-hydroxyacyl-[acyl-carrier-protein] dehydratase</fullName>
            <ecNumber evidence="3">4.2.1.59</ecNumber>
        </recommendedName>
    </domain>
    <domain>
        <recommendedName>
            <fullName evidence="3">Enoyl-[acyl-carrier-protein] reductase [NADH]</fullName>
            <ecNumber evidence="3">1.3.1.9</ecNumber>
        </recommendedName>
    </domain>
    <domain>
        <recommendedName>
            <fullName evidence="3">[Acyl-carrier-protein] acetyltransferase</fullName>
            <ecNumber evidence="3">2.3.1.38</ecNumber>
        </recommendedName>
    </domain>
    <domain>
        <recommendedName>
            <fullName evidence="3">[Acyl-carrier-protein] malonyltransferase</fullName>
            <ecNumber evidence="3">2.3.1.39</ecNumber>
        </recommendedName>
        <alternativeName>
            <fullName evidence="3">S-acyl fatty acid synthase thioesterase</fullName>
            <ecNumber evidence="3">3.1.2.14</ecNumber>
        </alternativeName>
        <alternativeName>
            <fullName evidence="14">Sterigmatocystin biosynthesis cluster protein K</fullName>
        </alternativeName>
    </domain>
</protein>
<name>STCK_EMENI</name>
<proteinExistence type="evidence at transcript level"/>
<accession>Q00706</accession>
<accession>C8VDT7</accession>
<accession>Q5AV66</accession>
<comment type="function">
    <text evidence="2 5 6 8 9 10 11 13 16">Fatty acid synthase beta subunit; part of the gene cluster that mediates the biosynthesis of sterigmatocystin (ST), a polyketide-derived furanocoumarin which is part of the most toxic and carcinogenic compounds among the known mycotoxins (PubMed:8643646). The first step in the biosynthesis of sterigmatocystin is the production of hexanoate by the fatty acid synthase (FAS) units stcJ and stcK (PubMed:8962148). The polyketide backbone is assembled by the non-reducing polyketide synthase stcA by condensation of the starter hexanoyl-CoA and 7 malonyl-CoA extender units followed by cyclization and release of norsolorinic acid (By similarity). Norsolorinic acid is the first stable intermediate in the biosynthesis of sterigmatocystin and is converted into averantin (AVN) by the ketoreductase stcE which reduces the hexanoate ketone to an alcohol (Probable) (PubMed:8643646). Averantin is then oxidized into 5'-hydroxyaverantin (HAVN) by the cytochrome P450 monooxygenase stcF (PubMed:10618248). 5'-hydroxyaverantin is further converted to 5'-oxyaverantin (OAVN) by the 5'-hydroxyaverantin dehydrogenase stcG (PubMed:24957370). The next step is the conversion of OAVN into averufin (AVF) which is catalyzed by a yet to be identified enzyme (PubMed:24957370). The cytochrome P450 monooxygenase stcB and the flavin-binding monooxygenase stcW are both required for the conversion of averufin to 1-hydroxyversicolorone (PubMed:10618248). The esterase stcI probably catalyzes the formation of versiconal hemiacetal acetate from 1-hydroxyversicolorone (PubMed:24957370). The oxydoreductase stcN then probably catalyzes the biosynthetic step from versiconal to versicolorin B (VERB) (PubMed:24957370). The next step is performed by the versicolorin B desaturase stcL to produce versicolorin A (VERA) (PubMed:8999832). The ketoreductase stcU and the cytochrome P450 monooxygenase stcS are involved in the conversion of versicolorin A to demethylsterigmatocystin (PubMed:7486998). The Baeyer-Villiger oxidas stcQ and the reductase stcR might be involved in the biosynthetic step from versicolorin A to demethylsterigmatocystin (PubMed:24957370). The final step in the biosynthesis of sterigmatocystin is the methylation of demethylsterigmatocystin catalyzed by the methyltransferase stcP (PubMed:8900026).</text>
</comment>
<comment type="catalytic activity">
    <reaction evidence="3">
        <text>acetyl-CoA + n malonyl-CoA + 2n NADPH + 4n H(+) = a long-chain-acyl-CoA + n CoA + n CO2 + 2n NADP(+).</text>
        <dbReference type="EC" id="2.3.1.86"/>
    </reaction>
</comment>
<comment type="catalytic activity">
    <reaction evidence="3">
        <text>holo-[ACP] + acetyl-CoA = acetyl-[ACP] + CoA</text>
        <dbReference type="Rhea" id="RHEA:41788"/>
        <dbReference type="Rhea" id="RHEA-COMP:9621"/>
        <dbReference type="Rhea" id="RHEA-COMP:9685"/>
        <dbReference type="ChEBI" id="CHEBI:57287"/>
        <dbReference type="ChEBI" id="CHEBI:57288"/>
        <dbReference type="ChEBI" id="CHEBI:64479"/>
        <dbReference type="ChEBI" id="CHEBI:78446"/>
        <dbReference type="EC" id="2.3.1.38"/>
    </reaction>
</comment>
<comment type="catalytic activity">
    <reaction evidence="3">
        <text>holo-[ACP] + malonyl-CoA = malonyl-[ACP] + CoA</text>
        <dbReference type="Rhea" id="RHEA:41792"/>
        <dbReference type="Rhea" id="RHEA-COMP:9623"/>
        <dbReference type="Rhea" id="RHEA-COMP:9685"/>
        <dbReference type="ChEBI" id="CHEBI:57287"/>
        <dbReference type="ChEBI" id="CHEBI:57384"/>
        <dbReference type="ChEBI" id="CHEBI:64479"/>
        <dbReference type="ChEBI" id="CHEBI:78449"/>
        <dbReference type="EC" id="2.3.1.39"/>
    </reaction>
</comment>
<comment type="catalytic activity">
    <reaction evidence="3">
        <text>a (3R)-hydroxyacyl-[ACP] = a (2E)-enoyl-[ACP] + H2O</text>
        <dbReference type="Rhea" id="RHEA:13097"/>
        <dbReference type="Rhea" id="RHEA-COMP:9925"/>
        <dbReference type="Rhea" id="RHEA-COMP:9945"/>
        <dbReference type="ChEBI" id="CHEBI:15377"/>
        <dbReference type="ChEBI" id="CHEBI:78784"/>
        <dbReference type="ChEBI" id="CHEBI:78827"/>
        <dbReference type="EC" id="4.2.1.59"/>
    </reaction>
</comment>
<comment type="catalytic activity">
    <reaction evidence="3">
        <text>a 2,3-saturated acyl-[ACP] + NAD(+) = a (2E)-enoyl-[ACP] + NADH + H(+)</text>
        <dbReference type="Rhea" id="RHEA:10240"/>
        <dbReference type="Rhea" id="RHEA-COMP:9925"/>
        <dbReference type="Rhea" id="RHEA-COMP:9926"/>
        <dbReference type="ChEBI" id="CHEBI:15378"/>
        <dbReference type="ChEBI" id="CHEBI:57540"/>
        <dbReference type="ChEBI" id="CHEBI:57945"/>
        <dbReference type="ChEBI" id="CHEBI:78784"/>
        <dbReference type="ChEBI" id="CHEBI:78785"/>
        <dbReference type="EC" id="1.3.1.9"/>
    </reaction>
</comment>
<comment type="catalytic activity">
    <reaction evidence="3">
        <text>(9Z)-octadecenoyl-[ACP] + H2O = (9Z)-octadecenoate + holo-[ACP] + H(+)</text>
        <dbReference type="Rhea" id="RHEA:15057"/>
        <dbReference type="Rhea" id="RHEA-COMP:9685"/>
        <dbReference type="Rhea" id="RHEA-COMP:9924"/>
        <dbReference type="ChEBI" id="CHEBI:15377"/>
        <dbReference type="ChEBI" id="CHEBI:15378"/>
        <dbReference type="ChEBI" id="CHEBI:30823"/>
        <dbReference type="ChEBI" id="CHEBI:64479"/>
        <dbReference type="ChEBI" id="CHEBI:78783"/>
        <dbReference type="EC" id="3.1.2.14"/>
    </reaction>
</comment>
<comment type="pathway">
    <text evidence="8">Mycotoxin biosynthesis; sterigmatocystin biosynthesis.</text>
</comment>
<comment type="subunit">
    <text evidence="1">[Alpha(6)beta(6)] hexamers of two multifunctional subunits (alpha and beta).</text>
</comment>
<comment type="induction">
    <text evidence="7 8 12">The genes forming the sterigmatocystin biosynthesis cluster are co-regulated and induced on oatmeal porridge or the fungal isolates were grown either on oatmeal porridge or in YEC medium (0.2% yeast extract, 5.0% corn steep liquor) (PubMed:8017929, PubMed:8643646). Expression is positively regulated by the cluster-specific transcription factor aflR that binds the palindromic sequence 5'-TCG(N5)CGA-3'found in the promoter (PubMed:9680223).</text>
</comment>
<comment type="similarity">
    <text evidence="15">Belongs to the fungal fatty acid synthetase subunit beta family.</text>
</comment>
<comment type="sequence caution" evidence="15">
    <conflict type="frameshift">
        <sequence resource="EMBL-CDS" id="AAC49199"/>
    </conflict>
</comment>
<gene>
    <name evidence="14" type="primary">stcK</name>
    <name type="ORF">AN7814</name>
</gene>
<dbReference type="EC" id="2.3.1.86" evidence="3"/>
<dbReference type="EC" id="4.2.1.59" evidence="3"/>
<dbReference type="EC" id="1.3.1.9" evidence="3"/>
<dbReference type="EC" id="2.3.1.38" evidence="3"/>
<dbReference type="EC" id="2.3.1.39" evidence="3"/>
<dbReference type="EC" id="3.1.2.14" evidence="3"/>
<dbReference type="EMBL" id="U34740">
    <property type="protein sequence ID" value="AAC49199.1"/>
    <property type="status" value="ALT_FRAME"/>
    <property type="molecule type" value="Genomic_DNA"/>
</dbReference>
<dbReference type="EMBL" id="AACD01000132">
    <property type="protein sequence ID" value="EAA61602.1"/>
    <property type="molecule type" value="Genomic_DNA"/>
</dbReference>
<dbReference type="EMBL" id="BN001304">
    <property type="protein sequence ID" value="CBF80162.1"/>
    <property type="molecule type" value="Genomic_DNA"/>
</dbReference>
<dbReference type="RefSeq" id="XP_681083.1">
    <property type="nucleotide sequence ID" value="XM_675991.1"/>
</dbReference>
<dbReference type="SMR" id="Q00706"/>
<dbReference type="STRING" id="227321.Q00706"/>
<dbReference type="EnsemblFungi" id="CBF80162">
    <property type="protein sequence ID" value="CBF80162"/>
    <property type="gene ID" value="ANIA_07814"/>
</dbReference>
<dbReference type="KEGG" id="ani:ANIA_07814"/>
<dbReference type="VEuPathDB" id="FungiDB:AN7814"/>
<dbReference type="eggNOG" id="ENOG502SKWI">
    <property type="taxonomic scope" value="Eukaryota"/>
</dbReference>
<dbReference type="HOGENOM" id="CLU_000114_5_0_1"/>
<dbReference type="InParanoid" id="Q00706"/>
<dbReference type="OMA" id="YVCAGHF"/>
<dbReference type="OrthoDB" id="4251012at2759"/>
<dbReference type="UniPathway" id="UPA00377"/>
<dbReference type="Proteomes" id="UP000000560">
    <property type="component" value="Chromosome IV"/>
</dbReference>
<dbReference type="GO" id="GO:0005835">
    <property type="term" value="C:fatty acid synthase complex"/>
    <property type="evidence" value="ECO:0000318"/>
    <property type="project" value="GO_Central"/>
</dbReference>
<dbReference type="GO" id="GO:0019171">
    <property type="term" value="F:(3R)-hydroxyacyl-[acyl-carrier-protein] dehydratase activity"/>
    <property type="evidence" value="ECO:0007669"/>
    <property type="project" value="InterPro"/>
</dbReference>
<dbReference type="GO" id="GO:0004313">
    <property type="term" value="F:[acyl-carrier-protein] S-acetyltransferase activity"/>
    <property type="evidence" value="ECO:0007669"/>
    <property type="project" value="InterPro"/>
</dbReference>
<dbReference type="GO" id="GO:0004314">
    <property type="term" value="F:[acyl-carrier-protein] S-malonyltransferase activity"/>
    <property type="evidence" value="ECO:0007669"/>
    <property type="project" value="InterPro"/>
</dbReference>
<dbReference type="GO" id="GO:0004318">
    <property type="term" value="F:enoyl-[acyl-carrier-protein] reductase (NADH) activity"/>
    <property type="evidence" value="ECO:0007669"/>
    <property type="project" value="InterPro"/>
</dbReference>
<dbReference type="GO" id="GO:0004312">
    <property type="term" value="F:fatty acid synthase activity"/>
    <property type="evidence" value="ECO:0007669"/>
    <property type="project" value="InterPro"/>
</dbReference>
<dbReference type="GO" id="GO:0016787">
    <property type="term" value="F:hydrolase activity"/>
    <property type="evidence" value="ECO:0007669"/>
    <property type="project" value="UniProtKB-KW"/>
</dbReference>
<dbReference type="GO" id="GO:0042759">
    <property type="term" value="P:long-chain fatty acid biosynthetic process"/>
    <property type="evidence" value="ECO:0000318"/>
    <property type="project" value="GO_Central"/>
</dbReference>
<dbReference type="GO" id="GO:0045461">
    <property type="term" value="P:sterigmatocystin biosynthetic process"/>
    <property type="evidence" value="ECO:0000315"/>
    <property type="project" value="AspGD"/>
</dbReference>
<dbReference type="CDD" id="cd03447">
    <property type="entry name" value="FAS_MaoC"/>
    <property type="match status" value="1"/>
</dbReference>
<dbReference type="FunFam" id="3.10.129.10:FF:000111">
    <property type="entry name" value="Fatty acid synthase beta subunit aflB"/>
    <property type="match status" value="1"/>
</dbReference>
<dbReference type="FunFam" id="3.20.20.70:FF:000078">
    <property type="entry name" value="Fatty acid synthase beta subunit dehydratase"/>
    <property type="match status" value="1"/>
</dbReference>
<dbReference type="FunFam" id="3.30.70.3330:FF:000001">
    <property type="entry name" value="Fatty acid synthase subunit beta dehydratase"/>
    <property type="match status" value="1"/>
</dbReference>
<dbReference type="Gene3D" id="1.20.930.70">
    <property type="match status" value="1"/>
</dbReference>
<dbReference type="Gene3D" id="3.30.1120.100">
    <property type="match status" value="1"/>
</dbReference>
<dbReference type="Gene3D" id="3.30.70.3320">
    <property type="match status" value="1"/>
</dbReference>
<dbReference type="Gene3D" id="3.30.70.3330">
    <property type="match status" value="1"/>
</dbReference>
<dbReference type="Gene3D" id="6.10.60.10">
    <property type="match status" value="1"/>
</dbReference>
<dbReference type="Gene3D" id="3.20.20.70">
    <property type="entry name" value="Aldolase class I"/>
    <property type="match status" value="1"/>
</dbReference>
<dbReference type="Gene3D" id="3.10.129.10">
    <property type="entry name" value="Hotdog Thioesterase"/>
    <property type="match status" value="2"/>
</dbReference>
<dbReference type="Gene3D" id="3.40.366.10">
    <property type="entry name" value="Malonyl-Coenzyme A Acyl Carrier Protein, domain 2"/>
    <property type="match status" value="3"/>
</dbReference>
<dbReference type="InterPro" id="IPR001227">
    <property type="entry name" value="Ac_transferase_dom_sf"/>
</dbReference>
<dbReference type="InterPro" id="IPR014043">
    <property type="entry name" value="Acyl_transferase_dom"/>
</dbReference>
<dbReference type="InterPro" id="IPR016035">
    <property type="entry name" value="Acyl_Trfase/lysoPLipase"/>
</dbReference>
<dbReference type="InterPro" id="IPR013785">
    <property type="entry name" value="Aldolase_TIM"/>
</dbReference>
<dbReference type="InterPro" id="IPR039569">
    <property type="entry name" value="FAS1-like_DH_region"/>
</dbReference>
<dbReference type="InterPro" id="IPR016452">
    <property type="entry name" value="Fas1/AflB-like"/>
</dbReference>
<dbReference type="InterPro" id="IPR013565">
    <property type="entry name" value="Fas1/AflB-like_central"/>
</dbReference>
<dbReference type="InterPro" id="IPR040883">
    <property type="entry name" value="FAS_meander"/>
</dbReference>
<dbReference type="InterPro" id="IPR003965">
    <property type="entry name" value="Fatty_acid_synthase"/>
</dbReference>
<dbReference type="InterPro" id="IPR050830">
    <property type="entry name" value="Fungal_FAS"/>
</dbReference>
<dbReference type="InterPro" id="IPR029069">
    <property type="entry name" value="HotDog_dom_sf"/>
</dbReference>
<dbReference type="InterPro" id="IPR002539">
    <property type="entry name" value="MaoC-like_dom"/>
</dbReference>
<dbReference type="InterPro" id="IPR032088">
    <property type="entry name" value="SAT"/>
</dbReference>
<dbReference type="PANTHER" id="PTHR10982:SF21">
    <property type="entry name" value="FATTY ACID SYNTHASE SUBUNIT BETA"/>
    <property type="match status" value="1"/>
</dbReference>
<dbReference type="PANTHER" id="PTHR10982">
    <property type="entry name" value="MALONYL COA-ACYL CARRIER PROTEIN TRANSACYLASE"/>
    <property type="match status" value="1"/>
</dbReference>
<dbReference type="Pfam" id="PF00698">
    <property type="entry name" value="Acyl_transf_1"/>
    <property type="match status" value="1"/>
</dbReference>
<dbReference type="Pfam" id="PF08354">
    <property type="entry name" value="Fas1-AflB-like_hel"/>
    <property type="match status" value="1"/>
</dbReference>
<dbReference type="Pfam" id="PF13452">
    <property type="entry name" value="FAS1_DH_region"/>
    <property type="match status" value="1"/>
</dbReference>
<dbReference type="Pfam" id="PF22235">
    <property type="entry name" value="FAS1_thioest_ins"/>
    <property type="match status" value="1"/>
</dbReference>
<dbReference type="Pfam" id="PF17951">
    <property type="entry name" value="FAS_meander"/>
    <property type="match status" value="1"/>
</dbReference>
<dbReference type="Pfam" id="PF01575">
    <property type="entry name" value="MaoC_dehydratas"/>
    <property type="match status" value="1"/>
</dbReference>
<dbReference type="Pfam" id="PF16073">
    <property type="entry name" value="SAT"/>
    <property type="match status" value="1"/>
</dbReference>
<dbReference type="PIRSF" id="PIRSF005562">
    <property type="entry name" value="FAS_yeast_beta"/>
    <property type="match status" value="1"/>
</dbReference>
<dbReference type="PRINTS" id="PR01483">
    <property type="entry name" value="FASYNTHASE"/>
</dbReference>
<dbReference type="SMART" id="SM00827">
    <property type="entry name" value="PKS_AT"/>
    <property type="match status" value="1"/>
</dbReference>
<dbReference type="SUPFAM" id="SSF52151">
    <property type="entry name" value="FabD/lysophospholipase-like"/>
    <property type="match status" value="2"/>
</dbReference>
<dbReference type="SUPFAM" id="SSF54637">
    <property type="entry name" value="Thioesterase/thiol ester dehydrase-isomerase"/>
    <property type="match status" value="2"/>
</dbReference>
<reference key="1">
    <citation type="journal article" date="1996" name="Proc. Natl. Acad. Sci. U.S.A.">
        <title>Twenty-five coregulated transcripts define a sterigmatocystin gene cluster in Aspergillus nidulans.</title>
        <authorList>
            <person name="Brown D.W."/>
            <person name="Yu J.-H."/>
            <person name="Kelkar H.S."/>
            <person name="Fernandes M."/>
            <person name="Nesbitt T.C."/>
            <person name="Keller N.P."/>
            <person name="Adams T.H."/>
            <person name="Leonard T.J."/>
        </authorList>
    </citation>
    <scope>NUCLEOTIDE SEQUENCE [GENOMIC DNA]</scope>
    <scope>INDUCTION</scope>
    <scope>FUNCTION</scope>
    <scope>PATHWAY</scope>
    <source>
        <strain>FGSC 26</strain>
    </source>
</reference>
<reference key="2">
    <citation type="journal article" date="2005" name="Nature">
        <title>Sequencing of Aspergillus nidulans and comparative analysis with A. fumigatus and A. oryzae.</title>
        <authorList>
            <person name="Galagan J.E."/>
            <person name="Calvo S.E."/>
            <person name="Cuomo C."/>
            <person name="Ma L.-J."/>
            <person name="Wortman J.R."/>
            <person name="Batzoglou S."/>
            <person name="Lee S.-I."/>
            <person name="Bastuerkmen M."/>
            <person name="Spevak C.C."/>
            <person name="Clutterbuck J."/>
            <person name="Kapitonov V."/>
            <person name="Jurka J."/>
            <person name="Scazzocchio C."/>
            <person name="Farman M.L."/>
            <person name="Butler J."/>
            <person name="Purcell S."/>
            <person name="Harris S."/>
            <person name="Braus G.H."/>
            <person name="Draht O."/>
            <person name="Busch S."/>
            <person name="D'Enfert C."/>
            <person name="Bouchier C."/>
            <person name="Goldman G.H."/>
            <person name="Bell-Pedersen D."/>
            <person name="Griffiths-Jones S."/>
            <person name="Doonan J.H."/>
            <person name="Yu J."/>
            <person name="Vienken K."/>
            <person name="Pain A."/>
            <person name="Freitag M."/>
            <person name="Selker E.U."/>
            <person name="Archer D.B."/>
            <person name="Penalva M.A."/>
            <person name="Oakley B.R."/>
            <person name="Momany M."/>
            <person name="Tanaka T."/>
            <person name="Kumagai T."/>
            <person name="Asai K."/>
            <person name="Machida M."/>
            <person name="Nierman W.C."/>
            <person name="Denning D.W."/>
            <person name="Caddick M.X."/>
            <person name="Hynes M."/>
            <person name="Paoletti M."/>
            <person name="Fischer R."/>
            <person name="Miller B.L."/>
            <person name="Dyer P.S."/>
            <person name="Sachs M.S."/>
            <person name="Osmani S.A."/>
            <person name="Birren B.W."/>
        </authorList>
    </citation>
    <scope>NUCLEOTIDE SEQUENCE [LARGE SCALE GENOMIC DNA]</scope>
    <source>
        <strain>FGSC A4 / ATCC 38163 / CBS 112.46 / NRRL 194 / M139</strain>
    </source>
</reference>
<reference key="3">
    <citation type="journal article" date="2009" name="Fungal Genet. Biol.">
        <title>The 2008 update of the Aspergillus nidulans genome annotation: a community effort.</title>
        <authorList>
            <person name="Wortman J.R."/>
            <person name="Gilsenan J.M."/>
            <person name="Joardar V."/>
            <person name="Deegan J."/>
            <person name="Clutterbuck J."/>
            <person name="Andersen M.R."/>
            <person name="Archer D."/>
            <person name="Bencina M."/>
            <person name="Braus G."/>
            <person name="Coutinho P."/>
            <person name="von Dohren H."/>
            <person name="Doonan J."/>
            <person name="Driessen A.J."/>
            <person name="Durek P."/>
            <person name="Espeso E."/>
            <person name="Fekete E."/>
            <person name="Flipphi M."/>
            <person name="Estrada C.G."/>
            <person name="Geysens S."/>
            <person name="Goldman G."/>
            <person name="de Groot P.W."/>
            <person name="Hansen K."/>
            <person name="Harris S.D."/>
            <person name="Heinekamp T."/>
            <person name="Helmstaedt K."/>
            <person name="Henrissat B."/>
            <person name="Hofmann G."/>
            <person name="Homan T."/>
            <person name="Horio T."/>
            <person name="Horiuchi H."/>
            <person name="James S."/>
            <person name="Jones M."/>
            <person name="Karaffa L."/>
            <person name="Karanyi Z."/>
            <person name="Kato M."/>
            <person name="Keller N."/>
            <person name="Kelly D.E."/>
            <person name="Kiel J.A."/>
            <person name="Kim J.M."/>
            <person name="van der Klei I.J."/>
            <person name="Klis F.M."/>
            <person name="Kovalchuk A."/>
            <person name="Krasevec N."/>
            <person name="Kubicek C.P."/>
            <person name="Liu B."/>
            <person name="Maccabe A."/>
            <person name="Meyer V."/>
            <person name="Mirabito P."/>
            <person name="Miskei M."/>
            <person name="Mos M."/>
            <person name="Mullins J."/>
            <person name="Nelson D.R."/>
            <person name="Nielsen J."/>
            <person name="Oakley B.R."/>
            <person name="Osmani S.A."/>
            <person name="Pakula T."/>
            <person name="Paszewski A."/>
            <person name="Paulsen I."/>
            <person name="Pilsyk S."/>
            <person name="Pocsi I."/>
            <person name="Punt P.J."/>
            <person name="Ram A.F."/>
            <person name="Ren Q."/>
            <person name="Robellet X."/>
            <person name="Robson G."/>
            <person name="Seiboth B."/>
            <person name="van Solingen P."/>
            <person name="Specht T."/>
            <person name="Sun J."/>
            <person name="Taheri-Talesh N."/>
            <person name="Takeshita N."/>
            <person name="Ussery D."/>
            <person name="vanKuyk P.A."/>
            <person name="Visser H."/>
            <person name="van de Vondervoort P.J."/>
            <person name="de Vries R.P."/>
            <person name="Walton J."/>
            <person name="Xiang X."/>
            <person name="Xiong Y."/>
            <person name="Zeng A.P."/>
            <person name="Brandt B.W."/>
            <person name="Cornell M.J."/>
            <person name="van den Hondel C.A."/>
            <person name="Visser J."/>
            <person name="Oliver S.G."/>
            <person name="Turner G."/>
        </authorList>
    </citation>
    <scope>GENOME REANNOTATION</scope>
    <source>
        <strain>FGSC A4 / ATCC 38163 / CBS 112.46 / NRRL 194 / M139</strain>
    </source>
</reference>
<reference key="4">
    <citation type="journal article" date="1994" name="Appl. Environ. Microbiol.">
        <title>Aspergillus nidulans verA is required for production of the mycotoxin sterigmatocystin.</title>
        <authorList>
            <person name="Keller N.P."/>
            <person name="Kantz N.J."/>
            <person name="Adams T.H."/>
        </authorList>
    </citation>
    <scope>FUNCTION</scope>
    <scope>INDUCTION</scope>
</reference>
<reference key="5">
    <citation type="journal article" date="1995" name="Appl. Environ. Microbiol.">
        <title>StcS, a putative P-450 monooxygenase, is required for the conversion of versicolorin A to sterigmatocystin in Aspergillus nidulans.</title>
        <authorList>
            <person name="Keller N.P."/>
            <person name="Segner S."/>
            <person name="Bhatnagar D."/>
            <person name="Adams T.H."/>
        </authorList>
    </citation>
    <scope>FUNCTION</scope>
</reference>
<reference key="6">
    <citation type="journal article" date="1995" name="J. Bacteriol.">
        <title>Sterigmatocystin biosynthesis in Aspergillus nidulans requires a novel type I polyketide synthase.</title>
        <authorList>
            <person name="Yu J.-H."/>
            <person name="Leonard T.J."/>
        </authorList>
    </citation>
    <scope>FUNCTION</scope>
    <source>
        <strain>FGSC A4 / ATCC 38163 / CBS 112.46 / NRRL 194 / M139</strain>
    </source>
</reference>
<reference key="7">
    <citation type="journal article" date="1996" name="Appl. Environ. Microbiol.">
        <title>Aspergillus nidulans stcP encodes an O-methyltransferase that is required for sterigmatocystin biosynthesis.</title>
        <authorList>
            <person name="Kelkar H.S."/>
            <person name="Keller N.P."/>
            <person name="Adams T.H."/>
        </authorList>
    </citation>
    <scope>FUNCTION</scope>
</reference>
<reference key="8">
    <citation type="journal article" date="1996" name="Proc. Natl. Acad. Sci. U.S.A.">
        <title>Aspergillus has distinct fatty acid synthases for primary and secondary metabolism.</title>
        <authorList>
            <person name="Brown D.W."/>
            <person name="Adams T.H."/>
            <person name="Keller N.P."/>
        </authorList>
    </citation>
    <scope>FUNCTION</scope>
</reference>
<reference key="9">
    <citation type="journal article" date="1997" name="J. Biol. Chem.">
        <title>Aspergillus nidulans stcL encodes a putative cytochrome P-450 monooxygenase required for bisfuran desaturation during aflatoxin/sterigmatocystin biosynthesis.</title>
        <authorList>
            <person name="Kelkar H.S."/>
            <person name="Skloss T.W."/>
            <person name="Haw J.F."/>
            <person name="Keller N.P."/>
            <person name="Adams T.H."/>
        </authorList>
    </citation>
    <scope>FUNCTION</scope>
</reference>
<reference key="10">
    <citation type="journal article" date="1998" name="Mol. Microbiol.">
        <title>Sequence-specific binding by Aspergillus nidulans aflR, a C6 zinc cluster protein regulating mycotoxin biosynthesis.</title>
        <authorList>
            <person name="Fernandes M."/>
            <person name="Keller N.P."/>
            <person name="Adams T.H."/>
        </authorList>
    </citation>
    <scope>INDUCTION</scope>
</reference>
<reference key="11">
    <citation type="journal article" date="2000" name="Appl. Environ. Microbiol.">
        <title>Requirement of monooxygenase-mediated steps for sterigmatocystin biosynthesis by Aspergillus nidulans.</title>
        <authorList>
            <person name="Keller N.P."/>
            <person name="Watanabe C.M."/>
            <person name="Kelkar H.S."/>
            <person name="Adams T.H."/>
            <person name="Townsend C.A."/>
        </authorList>
    </citation>
    <scope>FUNCTION</scope>
</reference>
<reference key="12">
    <citation type="journal article" date="2012" name="Metabolites">
        <title>Genetics of polyketide metabolism in Aspergillus nidulans.</title>
        <authorList>
            <person name="Klejnstrup M.L."/>
            <person name="Frandsen R.J."/>
            <person name="Holm D.K."/>
            <person name="Nielsen M.T."/>
            <person name="Mortensen U.H."/>
            <person name="Larsen T.O."/>
            <person name="Nielsen J.B."/>
        </authorList>
    </citation>
    <scope>REVIEW ON STERIGMATOCYSTIN BIOSYNTHESIS</scope>
</reference>
<organism>
    <name type="scientific">Emericella nidulans (strain FGSC A4 / ATCC 38163 / CBS 112.46 / NRRL 194 / M139)</name>
    <name type="common">Aspergillus nidulans</name>
    <dbReference type="NCBI Taxonomy" id="227321"/>
    <lineage>
        <taxon>Eukaryota</taxon>
        <taxon>Fungi</taxon>
        <taxon>Dikarya</taxon>
        <taxon>Ascomycota</taxon>
        <taxon>Pezizomycotina</taxon>
        <taxon>Eurotiomycetes</taxon>
        <taxon>Eurotiomycetidae</taxon>
        <taxon>Eurotiales</taxon>
        <taxon>Aspergillaceae</taxon>
        <taxon>Aspergillus</taxon>
        <taxon>Aspergillus subgen. Nidulantes</taxon>
    </lineage>
</organism>
<sequence>MTPSPFLDAVDAGLSRLYACFGGQGPSNWAGLDELVHLSHAYADCAPIQDLLDSSARRLESLAAIPHRSSFFAGRGFQLQAWLNDAAASAPLPEDLALSPYSFPINTLLSLLHYAITAYSLQLDPGQLRQKLQGAIGHSQGVFVAAAIAISHTDHGWPSFYRAADLALQLSFWVGLESHHASPRSILCANEVIDCLENGEGAPSHLLSVTGLDINHLERLVRKLNDQGGDSLYISLINGHNKFVLAGAPHALRGVCIALRSVKASPELDQSRVPFPLRRSVVDVQFLPVSAPYHSSLLSSVELRVTDAIGGLRLRGNDLAIPVYCQANGSLRNLQDYGTHDILLTLIQSVTVERVNWPALCWAMNDATHVLSFGPGAVGSLVQDVLEGTGMNVVNLSGQSMASNLSLLNLSAFALPLGKDWGRKYRPRLRKAAEGSAHASIETKMTRLLGTPHVMVAGMTPTTCSPELVAAIIQADYHVEFACGGYYNRATLETALRQLSRSIPPHRSITCNVIYASPKALSWQIQVLRRLIMEEGLPIDGITVGAGIPSPEVVKEWIDMLAISHIWFKPGSVDAIDRVLTIARQYPTLPVGIQWTGGRAGGHHSCEDFHLPILDCYARIRNCENVILVAGSGFGGAEDTWPYMNGSWSCKLGYAPMPFDGILLGSRMMVAREAKTSFAVKQLIVEAPGVKDDGNDNGAWAKCEHDAVGGVISVTSEMGQPIHVLATRAMRLWKEFDDRFFSIRDPKRLKAALKQHRVEIINRLNNDFARPWFAQTDSSKPTEIEELSYRQVLRRLCQLTYVQHQARWIDSSYLSLVHDFLRLAQGRLGSGSEAELRFLSCNTPIELEASFDAAYGVQGDQILYPEDVSLLINLFRRQGQKPVPFIPRLDADFQTWFKKDSLWQSEDVDAVVDQDAQRVCIIQGPVAVRHSRVCDEPVKDILDGITEAHLKMMLKEAASDNGYTWANQRDEKGNRLPGIETSQEGSLCRYYLVGPTLPSTEAIVEHLVGECAWGYAALSQKKVVFGQNRAPNPIRDAFKPDIGDVIEAKYMDGCLREITLYHSLRRQGDPRAIRAALGLIHLDGNKVSVTLLTRSKGKRPALEFKMELLGGTMGPLILKMHRTDYLDSVRRLYTDLWIGRDLPSPTSVGLNSEFTGDRVTITAEDVNTFLAIVGQAGPARCRAWGTRGPVVPIDYAVVIAWTALTKPILLEALDADPLRLLHQSASTRFVPGIRPLHVGDTVTTSSRITERTITTIGQRVEISAELLREGKPVVRLQTTFIIQRRPEESVSQQQFRCVEEPDMVIRVDSHTKLRVLMSRKWFLLDGPCSDLIGKILIFQLHSQTVFDAAGAPASLQVSGSVSLAPSDTSVVCVSSVGTRIGRVYMEEEGFGANPVMDFLNRHGAPRVQRQPLPRAGWTGDDAASISFTAPAQSEGYAMVSGDTNPIHVCPLFSRFAGLGQPVVHGLHLSATVRRILEWIIGDNERTRFCSWAPSFDGLVRANDRLRMEIQHFAMADGCMVVHVRVLKESTGEQVMHAEAVLEQAQTTYVFTGQGTQERGMGMALYDTNAAARAVWDRAERHFRSQYGISLLHIVRENPTSLTVNFGSRRGRQIRDIYLSMSDSDPSMLPGLTRDSRSYTFNYPSGLLMSTQFAQPALAVMEIAEYAHLQAQGVVQTQAIFAGHSLGEYSSLGACTTIMPFESLLSLILYRGLKMQNTLPRNANGRTDYGMVAADPSRIRSDFTEDRLIELVRLVSQATGVLLEVVNYNVHSRQYVCAGHVRSLWVLSHACDDLSRSTSPNSPQTMSECIAHHIPSSCSVTNETELSRGRATIPLAGVDIPFHSQMLRGHIDGYRQYLRHHLRVSDIKPEELVGRWIPNVTGKPFALDAPYIRLVQGVTQSRPLLELLRRVEENR</sequence>
<evidence type="ECO:0000250" key="1">
    <source>
        <dbReference type="UniProtKB" id="P19097"/>
    </source>
</evidence>
<evidence type="ECO:0000250" key="2">
    <source>
        <dbReference type="UniProtKB" id="Q12053"/>
    </source>
</evidence>
<evidence type="ECO:0000250" key="3">
    <source>
        <dbReference type="UniProtKB" id="Q8TGA1"/>
    </source>
</evidence>
<evidence type="ECO:0000255" key="4"/>
<evidence type="ECO:0000269" key="5">
    <source>
    </source>
</evidence>
<evidence type="ECO:0000269" key="6">
    <source>
    </source>
</evidence>
<evidence type="ECO:0000269" key="7">
    <source>
    </source>
</evidence>
<evidence type="ECO:0000269" key="8">
    <source>
    </source>
</evidence>
<evidence type="ECO:0000269" key="9">
    <source>
    </source>
</evidence>
<evidence type="ECO:0000269" key="10">
    <source>
    </source>
</evidence>
<evidence type="ECO:0000269" key="11">
    <source>
    </source>
</evidence>
<evidence type="ECO:0000269" key="12">
    <source>
    </source>
</evidence>
<evidence type="ECO:0000303" key="13">
    <source>
    </source>
</evidence>
<evidence type="ECO:0000303" key="14">
    <source>
    </source>
</evidence>
<evidence type="ECO:0000305" key="15"/>
<evidence type="ECO:0000305" key="16">
    <source>
    </source>
</evidence>